<dbReference type="EMBL" id="CR859414">
    <property type="protein sequence ID" value="CAH91586.1"/>
    <property type="molecule type" value="mRNA"/>
</dbReference>
<dbReference type="RefSeq" id="NP_001127437.1">
    <property type="nucleotide sequence ID" value="NM_001133965.1"/>
</dbReference>
<dbReference type="SMR" id="Q5R9H4"/>
<dbReference type="FunCoup" id="Q5R9H4">
    <property type="interactions" value="199"/>
</dbReference>
<dbReference type="STRING" id="9601.ENSPPYP00000003286"/>
<dbReference type="GeneID" id="100174508"/>
<dbReference type="KEGG" id="pon:100174508"/>
<dbReference type="CTD" id="29974"/>
<dbReference type="eggNOG" id="KOG0117">
    <property type="taxonomic scope" value="Eukaryota"/>
</dbReference>
<dbReference type="InParanoid" id="Q5R9H4"/>
<dbReference type="OrthoDB" id="3800936at2759"/>
<dbReference type="Proteomes" id="UP000001595">
    <property type="component" value="Unplaced"/>
</dbReference>
<dbReference type="GO" id="GO:0030895">
    <property type="term" value="C:apolipoprotein B mRNA editing enzyme complex"/>
    <property type="evidence" value="ECO:0000250"/>
    <property type="project" value="UniProtKB"/>
</dbReference>
<dbReference type="GO" id="GO:0005737">
    <property type="term" value="C:cytoplasm"/>
    <property type="evidence" value="ECO:0000250"/>
    <property type="project" value="UniProtKB"/>
</dbReference>
<dbReference type="GO" id="GO:0005783">
    <property type="term" value="C:endoplasmic reticulum"/>
    <property type="evidence" value="ECO:0007669"/>
    <property type="project" value="UniProtKB-SubCell"/>
</dbReference>
<dbReference type="GO" id="GO:0003727">
    <property type="term" value="F:single-stranded RNA binding"/>
    <property type="evidence" value="ECO:0000250"/>
    <property type="project" value="UniProtKB"/>
</dbReference>
<dbReference type="GO" id="GO:0006397">
    <property type="term" value="P:mRNA processing"/>
    <property type="evidence" value="ECO:0007669"/>
    <property type="project" value="UniProtKB-KW"/>
</dbReference>
<dbReference type="GO" id="GO:0050821">
    <property type="term" value="P:protein stabilization"/>
    <property type="evidence" value="ECO:0000250"/>
    <property type="project" value="UniProtKB"/>
</dbReference>
<dbReference type="CDD" id="cd19900">
    <property type="entry name" value="DSRM_A1CF"/>
    <property type="match status" value="1"/>
</dbReference>
<dbReference type="CDD" id="cd12486">
    <property type="entry name" value="RRM1_ACF"/>
    <property type="match status" value="1"/>
</dbReference>
<dbReference type="CDD" id="cd12490">
    <property type="entry name" value="RRM2_ACF"/>
    <property type="match status" value="1"/>
</dbReference>
<dbReference type="CDD" id="cd12498">
    <property type="entry name" value="RRM3_ACF"/>
    <property type="match status" value="1"/>
</dbReference>
<dbReference type="FunFam" id="3.30.160.20:FF:000025">
    <property type="entry name" value="APOBEC1 complementation factor isoform X1"/>
    <property type="match status" value="1"/>
</dbReference>
<dbReference type="FunFam" id="3.30.70.330:FF:000022">
    <property type="entry name" value="APOBEC1 complementation factor isoform X1"/>
    <property type="match status" value="1"/>
</dbReference>
<dbReference type="FunFam" id="3.30.70.330:FF:000026">
    <property type="entry name" value="APOBEC1 complementation factor isoform X1"/>
    <property type="match status" value="1"/>
</dbReference>
<dbReference type="FunFam" id="3.30.70.330:FF:000179">
    <property type="entry name" value="APOBEC1 complementation factor isoform X1"/>
    <property type="match status" value="1"/>
</dbReference>
<dbReference type="Gene3D" id="3.30.160.20">
    <property type="match status" value="1"/>
</dbReference>
<dbReference type="Gene3D" id="3.30.70.330">
    <property type="match status" value="3"/>
</dbReference>
<dbReference type="InterPro" id="IPR044461">
    <property type="entry name" value="A1CF_DSRM"/>
</dbReference>
<dbReference type="InterPro" id="IPR034538">
    <property type="entry name" value="ACF_RRM1"/>
</dbReference>
<dbReference type="InterPro" id="IPR006535">
    <property type="entry name" value="HnRNP_R/Q_splicing_fac"/>
</dbReference>
<dbReference type="InterPro" id="IPR012677">
    <property type="entry name" value="Nucleotide-bd_a/b_plait_sf"/>
</dbReference>
<dbReference type="InterPro" id="IPR035979">
    <property type="entry name" value="RBD_domain_sf"/>
</dbReference>
<dbReference type="InterPro" id="IPR000504">
    <property type="entry name" value="RRM_dom"/>
</dbReference>
<dbReference type="NCBIfam" id="TIGR01648">
    <property type="entry name" value="hnRNP-R-Q"/>
    <property type="match status" value="1"/>
</dbReference>
<dbReference type="PANTHER" id="PTHR21245">
    <property type="entry name" value="HETEROGENEOUS NUCLEAR RIBONUCLEOPROTEIN"/>
    <property type="match status" value="1"/>
</dbReference>
<dbReference type="Pfam" id="PF14709">
    <property type="entry name" value="DND1_DSRM"/>
    <property type="match status" value="1"/>
</dbReference>
<dbReference type="Pfam" id="PF00076">
    <property type="entry name" value="RRM_1"/>
    <property type="match status" value="3"/>
</dbReference>
<dbReference type="SMART" id="SM00360">
    <property type="entry name" value="RRM"/>
    <property type="match status" value="3"/>
</dbReference>
<dbReference type="SUPFAM" id="SSF54768">
    <property type="entry name" value="dsRNA-binding domain-like"/>
    <property type="match status" value="1"/>
</dbReference>
<dbReference type="SUPFAM" id="SSF54928">
    <property type="entry name" value="RNA-binding domain, RBD"/>
    <property type="match status" value="3"/>
</dbReference>
<dbReference type="PROSITE" id="PS50102">
    <property type="entry name" value="RRM"/>
    <property type="match status" value="3"/>
</dbReference>
<name>A1CF_PONAB</name>
<organism>
    <name type="scientific">Pongo abelii</name>
    <name type="common">Sumatran orangutan</name>
    <name type="synonym">Pongo pygmaeus abelii</name>
    <dbReference type="NCBI Taxonomy" id="9601"/>
    <lineage>
        <taxon>Eukaryota</taxon>
        <taxon>Metazoa</taxon>
        <taxon>Chordata</taxon>
        <taxon>Craniata</taxon>
        <taxon>Vertebrata</taxon>
        <taxon>Euteleostomi</taxon>
        <taxon>Mammalia</taxon>
        <taxon>Eutheria</taxon>
        <taxon>Euarchontoglires</taxon>
        <taxon>Primates</taxon>
        <taxon>Haplorrhini</taxon>
        <taxon>Catarrhini</taxon>
        <taxon>Hominidae</taxon>
        <taxon>Pongo</taxon>
    </lineage>
</organism>
<keyword id="KW-0963">Cytoplasm</keyword>
<keyword id="KW-0256">Endoplasmic reticulum</keyword>
<keyword id="KW-0507">mRNA processing</keyword>
<keyword id="KW-0539">Nucleus</keyword>
<keyword id="KW-0597">Phosphoprotein</keyword>
<keyword id="KW-1185">Reference proteome</keyword>
<keyword id="KW-0677">Repeat</keyword>
<keyword id="KW-0694">RNA-binding</keyword>
<evidence type="ECO:0000250" key="1"/>
<evidence type="ECO:0000250" key="2">
    <source>
        <dbReference type="UniProtKB" id="Q9NQ94"/>
    </source>
</evidence>
<evidence type="ECO:0000255" key="3">
    <source>
        <dbReference type="PROSITE-ProRule" id="PRU00176"/>
    </source>
</evidence>
<evidence type="ECO:0000312" key="4">
    <source>
        <dbReference type="EMBL" id="CAH91586.1"/>
    </source>
</evidence>
<protein>
    <recommendedName>
        <fullName>APOBEC1 complementation factor</fullName>
    </recommendedName>
    <alternativeName>
        <fullName>APOBEC1-stimulating protein</fullName>
    </alternativeName>
</protein>
<accession>Q5R9H4</accession>
<feature type="chain" id="PRO_0000081484" description="APOBEC1 complementation factor">
    <location>
        <begin position="1"/>
        <end position="587"/>
    </location>
</feature>
<feature type="domain" description="RRM 1" evidence="3">
    <location>
        <begin position="56"/>
        <end position="134"/>
    </location>
</feature>
<feature type="domain" description="RRM 2" evidence="3">
    <location>
        <begin position="136"/>
        <end position="218"/>
    </location>
</feature>
<feature type="domain" description="RRM 3" evidence="3">
    <location>
        <begin position="231"/>
        <end position="303"/>
    </location>
</feature>
<feature type="region of interest" description="Required for nuclear localization" evidence="2">
    <location>
        <begin position="360"/>
        <end position="409"/>
    </location>
</feature>
<feature type="modified residue" description="Phosphothreonine" evidence="2">
    <location>
        <position position="491"/>
    </location>
</feature>
<sequence>MESNHKSGDGLSGTQKEAALRALIQRTGYSLVQENGQRKYGGPPPGWDAAPPERGCEIFIGKLPRDLFEDELIPLCEKIGKIYEMRMMMDFNGNNRGYAFVTFSNKLEAKNAIKQLNNYEIRNGRLLGVCASVDNCRLFVGGIPKTKKREEILSEMKKVTEGVVDVIVYPSAADKTKNRGFAFVEYESHRAAAMARRKLLPGRIQLWGHPIAVDWAEPEVEVDEDTMSSVKILYVRNLMLSTSEEMIEKEFNNIKPGAVERVKKIRDYAFVHFSNREDAVEAMKALNGKVLDGSPIEVTLAKPVDKDSYVRYTRGTGGRGTMLQGEYTYSLGQVYDPTTTYLGAPVFYAPQAYAAIPSLHFPATKGHLSNRAIIRAPSVRGAAGVRGLGGRGYLAYTGLGRGYQVKGDKREDKLYDILPGMELTPMNPVTLKPQGIKLAPQILEEICQKNNWGQPVYQLHSAIGQDQRQLFLYKITIPALASQNPAIHPFTPPKLSAYVDEAKTYAAEYTLQTLGIPTDGGDAGTMATAAAVATAFPGYAVPNATAPVSAAQLKQAVTLGQDLAAYTTYEVYPTFAVTARGDGYGAF</sequence>
<gene>
    <name type="primary">A1CF</name>
    <name type="synonym">ACF</name>
</gene>
<proteinExistence type="evidence at transcript level"/>
<comment type="function">
    <text evidence="2">Essential component of the apolipoprotein B mRNA editing enzyme complex which is responsible for the postranscriptional editing of a CAA codon for Gln to a UAA codon for stop in APOB mRNA. Binds to APOB mRNA and is probably responsible for docking the catalytic subunit, APOBEC1, to the mRNA to allow it to deaminate its target cytosine. The complex also seems to protect the edited APOB mRNA from nonsense-mediated decay (By similarity).</text>
</comment>
<comment type="subunit">
    <text evidence="2">Part of the apolipoprotein B mRNA editing complex with APOBEC1. Interacts with TNPO2; TNPO2 may be responsible for transport of A1CF into the nucleus. Interacts with SYNCRIP. Interacts with CELF2/CUGBP2. Interacts with RBM47.</text>
</comment>
<comment type="subcellular location">
    <subcellularLocation>
        <location evidence="1">Nucleus</location>
    </subcellularLocation>
    <subcellularLocation>
        <location evidence="1">Endoplasmic reticulum</location>
    </subcellularLocation>
    <subcellularLocation>
        <location evidence="1">Cytoplasm</location>
    </subcellularLocation>
    <text evidence="1">Predominantly nuclear where it localizes to heterochromatin. Also cytoplasmic where it is found at the outer surface of the endoplasmic reticulum. Shuttles between the nucleus and cytoplasm. May be transported into the nucleus by the nuclear import protein TNPO2/TRN2 or by APOBEC1 (By similarity).</text>
</comment>
<comment type="domain">
    <text evidence="2">The RRM domains are necessary but not sufficient for binding to APOB mRNA. Additional residues in the pre-RRM and C-terminal regions are required for RNA-binding and for complementing APOBEC1 activity (By similarity).</text>
</comment>
<reference evidence="4" key="1">
    <citation type="submission" date="2004-11" db="EMBL/GenBank/DDBJ databases">
        <authorList>
            <consortium name="The German cDNA consortium"/>
        </authorList>
    </citation>
    <scope>NUCLEOTIDE SEQUENCE [LARGE SCALE MRNA]</scope>
    <source>
        <tissue>Kidney</tissue>
    </source>
</reference>